<name>ZAPB_SHESM</name>
<evidence type="ECO:0000255" key="1">
    <source>
        <dbReference type="HAMAP-Rule" id="MF_01196"/>
    </source>
</evidence>
<dbReference type="EMBL" id="CP000446">
    <property type="protein sequence ID" value="ABI40704.1"/>
    <property type="molecule type" value="Genomic_DNA"/>
</dbReference>
<dbReference type="RefSeq" id="WP_011624365.1">
    <property type="nucleotide sequence ID" value="NC_008321.1"/>
</dbReference>
<dbReference type="SMR" id="Q0HE13"/>
<dbReference type="KEGG" id="she:Shewmr4_3640"/>
<dbReference type="HOGENOM" id="CLU_171174_1_0_6"/>
<dbReference type="GO" id="GO:0005737">
    <property type="term" value="C:cytoplasm"/>
    <property type="evidence" value="ECO:0007669"/>
    <property type="project" value="UniProtKB-SubCell"/>
</dbReference>
<dbReference type="GO" id="GO:0000917">
    <property type="term" value="P:division septum assembly"/>
    <property type="evidence" value="ECO:0007669"/>
    <property type="project" value="UniProtKB-KW"/>
</dbReference>
<dbReference type="GO" id="GO:0043093">
    <property type="term" value="P:FtsZ-dependent cytokinesis"/>
    <property type="evidence" value="ECO:0007669"/>
    <property type="project" value="UniProtKB-UniRule"/>
</dbReference>
<dbReference type="Gene3D" id="1.20.5.340">
    <property type="match status" value="1"/>
</dbReference>
<dbReference type="HAMAP" id="MF_01196">
    <property type="entry name" value="ZapB"/>
    <property type="match status" value="1"/>
</dbReference>
<dbReference type="InterPro" id="IPR009252">
    <property type="entry name" value="Cell_div_ZapB"/>
</dbReference>
<dbReference type="Pfam" id="PF06005">
    <property type="entry name" value="ZapB"/>
    <property type="match status" value="1"/>
</dbReference>
<feature type="chain" id="PRO_0000333930" description="Cell division protein ZapB">
    <location>
        <begin position="1"/>
        <end position="73"/>
    </location>
</feature>
<feature type="coiled-coil region" evidence="1">
    <location>
        <begin position="3"/>
        <end position="67"/>
    </location>
</feature>
<reference key="1">
    <citation type="submission" date="2006-08" db="EMBL/GenBank/DDBJ databases">
        <title>Complete sequence of Shewanella sp. MR-4.</title>
        <authorList>
            <consortium name="US DOE Joint Genome Institute"/>
            <person name="Copeland A."/>
            <person name="Lucas S."/>
            <person name="Lapidus A."/>
            <person name="Barry K."/>
            <person name="Detter J.C."/>
            <person name="Glavina del Rio T."/>
            <person name="Hammon N."/>
            <person name="Israni S."/>
            <person name="Dalin E."/>
            <person name="Tice H."/>
            <person name="Pitluck S."/>
            <person name="Kiss H."/>
            <person name="Brettin T."/>
            <person name="Bruce D."/>
            <person name="Han C."/>
            <person name="Tapia R."/>
            <person name="Gilna P."/>
            <person name="Schmutz J."/>
            <person name="Larimer F."/>
            <person name="Land M."/>
            <person name="Hauser L."/>
            <person name="Kyrpides N."/>
            <person name="Mikhailova N."/>
            <person name="Nealson K."/>
            <person name="Konstantinidis K."/>
            <person name="Klappenbach J."/>
            <person name="Tiedje J."/>
            <person name="Richardson P."/>
        </authorList>
    </citation>
    <scope>NUCLEOTIDE SEQUENCE [LARGE SCALE GENOMIC DNA]</scope>
    <source>
        <strain>MR-4</strain>
    </source>
</reference>
<accession>Q0HE13</accession>
<keyword id="KW-0131">Cell cycle</keyword>
<keyword id="KW-0132">Cell division</keyword>
<keyword id="KW-0175">Coiled coil</keyword>
<keyword id="KW-0963">Cytoplasm</keyword>
<keyword id="KW-0717">Septation</keyword>
<proteinExistence type="inferred from homology"/>
<comment type="function">
    <text evidence="1">Non-essential, abundant cell division factor that is required for proper Z-ring formation. It is recruited early to the divisome by direct interaction with FtsZ, stimulating Z-ring assembly and thereby promoting cell division earlier in the cell cycle. Its recruitment to the Z-ring requires functional FtsA or ZipA.</text>
</comment>
<comment type="subunit">
    <text evidence="1">Homodimer. The ends of the coiled-coil dimer bind to each other, forming polymers. Interacts with FtsZ.</text>
</comment>
<comment type="subcellular location">
    <subcellularLocation>
        <location>Cytoplasm</location>
    </subcellularLocation>
    <text evidence="1">Localizes to the septum at mid-cell, in a FtsZ-like pattern.</text>
</comment>
<comment type="similarity">
    <text evidence="1">Belongs to the ZapB family.</text>
</comment>
<protein>
    <recommendedName>
        <fullName evidence="1">Cell division protein ZapB</fullName>
    </recommendedName>
</protein>
<gene>
    <name evidence="1" type="primary">zapB</name>
    <name type="ordered locus">Shewmr4_3640</name>
</gene>
<sequence length="73" mass="8329">MSLELLSKLETKIQATLETIELLKMELEEEKQKASTLSEQNQQLTEQNQQLQQELASWNDKVTGLVGLLNSEI</sequence>
<organism>
    <name type="scientific">Shewanella sp. (strain MR-4)</name>
    <dbReference type="NCBI Taxonomy" id="60480"/>
    <lineage>
        <taxon>Bacteria</taxon>
        <taxon>Pseudomonadati</taxon>
        <taxon>Pseudomonadota</taxon>
        <taxon>Gammaproteobacteria</taxon>
        <taxon>Alteromonadales</taxon>
        <taxon>Shewanellaceae</taxon>
        <taxon>Shewanella</taxon>
    </lineage>
</organism>